<proteinExistence type="inferred from homology"/>
<feature type="chain" id="PRO_0000335594" description="tRNA 2-selenouridine synthase">
    <location>
        <begin position="1"/>
        <end position="372"/>
    </location>
</feature>
<feature type="domain" description="Rhodanese" evidence="1">
    <location>
        <begin position="17"/>
        <end position="140"/>
    </location>
</feature>
<feature type="active site" description="S-selanylcysteine intermediate" evidence="1">
    <location>
        <position position="100"/>
    </location>
</feature>
<reference key="1">
    <citation type="submission" date="2007-09" db="EMBL/GenBank/DDBJ databases">
        <title>Complete sequence of chromosome of Serratia proteamaculans 568.</title>
        <authorList>
            <consortium name="US DOE Joint Genome Institute"/>
            <person name="Copeland A."/>
            <person name="Lucas S."/>
            <person name="Lapidus A."/>
            <person name="Barry K."/>
            <person name="Glavina del Rio T."/>
            <person name="Dalin E."/>
            <person name="Tice H."/>
            <person name="Pitluck S."/>
            <person name="Chain P."/>
            <person name="Malfatti S."/>
            <person name="Shin M."/>
            <person name="Vergez L."/>
            <person name="Schmutz J."/>
            <person name="Larimer F."/>
            <person name="Land M."/>
            <person name="Hauser L."/>
            <person name="Kyrpides N."/>
            <person name="Kim E."/>
            <person name="Taghavi S."/>
            <person name="Newman L."/>
            <person name="Vangronsveld J."/>
            <person name="van der Lelie D."/>
            <person name="Richardson P."/>
        </authorList>
    </citation>
    <scope>NUCLEOTIDE SEQUENCE [LARGE SCALE GENOMIC DNA]</scope>
    <source>
        <strain>568</strain>
    </source>
</reference>
<evidence type="ECO:0000255" key="1">
    <source>
        <dbReference type="HAMAP-Rule" id="MF_01622"/>
    </source>
</evidence>
<dbReference type="EC" id="2.9.1.3" evidence="1"/>
<dbReference type="EMBL" id="CP000826">
    <property type="protein sequence ID" value="ABV41820.1"/>
    <property type="molecule type" value="Genomic_DNA"/>
</dbReference>
<dbReference type="SMR" id="A8GFD0"/>
<dbReference type="STRING" id="399741.Spro_2719"/>
<dbReference type="KEGG" id="spe:Spro_2719"/>
<dbReference type="eggNOG" id="COG2603">
    <property type="taxonomic scope" value="Bacteria"/>
</dbReference>
<dbReference type="HOGENOM" id="CLU_043456_1_0_6"/>
<dbReference type="OrthoDB" id="9808735at2"/>
<dbReference type="GO" id="GO:0016765">
    <property type="term" value="F:transferase activity, transferring alkyl or aryl (other than methyl) groups"/>
    <property type="evidence" value="ECO:0007669"/>
    <property type="project" value="UniProtKB-UniRule"/>
</dbReference>
<dbReference type="GO" id="GO:0043828">
    <property type="term" value="F:tRNA 2-selenouridine synthase activity"/>
    <property type="evidence" value="ECO:0007669"/>
    <property type="project" value="UniProtKB-EC"/>
</dbReference>
<dbReference type="GO" id="GO:0002098">
    <property type="term" value="P:tRNA wobble uridine modification"/>
    <property type="evidence" value="ECO:0007669"/>
    <property type="project" value="UniProtKB-UniRule"/>
</dbReference>
<dbReference type="CDD" id="cd01520">
    <property type="entry name" value="RHOD_YbbB"/>
    <property type="match status" value="1"/>
</dbReference>
<dbReference type="Gene3D" id="3.40.250.10">
    <property type="entry name" value="Rhodanese-like domain"/>
    <property type="match status" value="1"/>
</dbReference>
<dbReference type="HAMAP" id="MF_01622">
    <property type="entry name" value="tRNA_sel_U_synth"/>
    <property type="match status" value="1"/>
</dbReference>
<dbReference type="InterPro" id="IPR027417">
    <property type="entry name" value="P-loop_NTPase"/>
</dbReference>
<dbReference type="InterPro" id="IPR001763">
    <property type="entry name" value="Rhodanese-like_dom"/>
</dbReference>
<dbReference type="InterPro" id="IPR036873">
    <property type="entry name" value="Rhodanese-like_dom_sf"/>
</dbReference>
<dbReference type="InterPro" id="IPR017582">
    <property type="entry name" value="SelU"/>
</dbReference>
<dbReference type="NCBIfam" id="NF008749">
    <property type="entry name" value="PRK11784.1-1"/>
    <property type="match status" value="1"/>
</dbReference>
<dbReference type="NCBIfam" id="NF008750">
    <property type="entry name" value="PRK11784.1-2"/>
    <property type="match status" value="1"/>
</dbReference>
<dbReference type="NCBIfam" id="NF008751">
    <property type="entry name" value="PRK11784.1-3"/>
    <property type="match status" value="1"/>
</dbReference>
<dbReference type="NCBIfam" id="TIGR03167">
    <property type="entry name" value="tRNA_sel_U_synt"/>
    <property type="match status" value="1"/>
</dbReference>
<dbReference type="PANTHER" id="PTHR30401">
    <property type="entry name" value="TRNA 2-SELENOURIDINE SYNTHASE"/>
    <property type="match status" value="1"/>
</dbReference>
<dbReference type="PANTHER" id="PTHR30401:SF0">
    <property type="entry name" value="TRNA 2-SELENOURIDINE SYNTHASE"/>
    <property type="match status" value="1"/>
</dbReference>
<dbReference type="SMART" id="SM00450">
    <property type="entry name" value="RHOD"/>
    <property type="match status" value="1"/>
</dbReference>
<dbReference type="SUPFAM" id="SSF52540">
    <property type="entry name" value="P-loop containing nucleoside triphosphate hydrolases"/>
    <property type="match status" value="1"/>
</dbReference>
<dbReference type="SUPFAM" id="SSF52821">
    <property type="entry name" value="Rhodanese/Cell cycle control phosphatase"/>
    <property type="match status" value="1"/>
</dbReference>
<dbReference type="PROSITE" id="PS50206">
    <property type="entry name" value="RHODANESE_3"/>
    <property type="match status" value="1"/>
</dbReference>
<sequence>MSATREREDGQDYRRIFLQDIPLIDVRAPVEFQQGAFANAVNLPLMNDDERQAVGTCYKQQGQQAAIALGHSLVNGRLREQRTAAWLAQCAQWPEGYIYCFRGGLRSQLVQQWLREAGVAYPRITGGYKALRNFLLTTLEQSAELPMVLIGGNTGSGKTLLVNELADGVDLEGAAHHRGSSFGRTLVSQSGQIDFENRLAVLLLKKQHGGCRRWVLEDEGRIIGSNNLPLPVFNRMQQAPVAVIDDPFEVRLARLQHEYIDRMRIEFEQAYGAQLGWQKYDEYLHHGLFAIRRRLGLERFQLLTQHLERALQYQQASGNSDEHQQWLVPLLQHYYDPMYHYQLEKKSQRIVFRGNYAEVREFLMTYSQNNGE</sequence>
<organism>
    <name type="scientific">Serratia proteamaculans (strain 568)</name>
    <dbReference type="NCBI Taxonomy" id="399741"/>
    <lineage>
        <taxon>Bacteria</taxon>
        <taxon>Pseudomonadati</taxon>
        <taxon>Pseudomonadota</taxon>
        <taxon>Gammaproteobacteria</taxon>
        <taxon>Enterobacterales</taxon>
        <taxon>Yersiniaceae</taxon>
        <taxon>Serratia</taxon>
    </lineage>
</organism>
<name>SELU_SERP5</name>
<gene>
    <name evidence="1" type="primary">selU</name>
    <name type="ordered locus">Spro_2719</name>
</gene>
<accession>A8GFD0</accession>
<keyword id="KW-0711">Selenium</keyword>
<keyword id="KW-0808">Transferase</keyword>
<protein>
    <recommendedName>
        <fullName evidence="1">tRNA 2-selenouridine synthase</fullName>
        <ecNumber evidence="1">2.9.1.3</ecNumber>
    </recommendedName>
</protein>
<comment type="function">
    <text evidence="1">Involved in the post-transcriptional modification of the uridine at the wobble position (U34) of tRNA(Lys), tRNA(Glu) and tRNA(Gln). Catalyzes the conversion of 2-thiouridine (S2U-RNA) to 2-selenouridine (Se2U-RNA). Acts in a two-step process involving geranylation of 2-thiouridine (S2U) to S-geranyl-2-thiouridine (geS2U) and subsequent selenation of the latter derivative to 2-selenouridine (Se2U) in the tRNA chain.</text>
</comment>
<comment type="catalytic activity">
    <reaction evidence="1">
        <text>5-methylaminomethyl-2-thiouridine(34) in tRNA + selenophosphate + (2E)-geranyl diphosphate + H2O + H(+) = 5-methylaminomethyl-2-selenouridine(34) in tRNA + (2E)-thiogeraniol + phosphate + diphosphate</text>
        <dbReference type="Rhea" id="RHEA:42716"/>
        <dbReference type="Rhea" id="RHEA-COMP:10195"/>
        <dbReference type="Rhea" id="RHEA-COMP:10196"/>
        <dbReference type="ChEBI" id="CHEBI:15377"/>
        <dbReference type="ChEBI" id="CHEBI:15378"/>
        <dbReference type="ChEBI" id="CHEBI:16144"/>
        <dbReference type="ChEBI" id="CHEBI:33019"/>
        <dbReference type="ChEBI" id="CHEBI:43474"/>
        <dbReference type="ChEBI" id="CHEBI:58057"/>
        <dbReference type="ChEBI" id="CHEBI:74455"/>
        <dbReference type="ChEBI" id="CHEBI:82743"/>
        <dbReference type="ChEBI" id="CHEBI:143703"/>
        <dbReference type="EC" id="2.9.1.3"/>
    </reaction>
    <physiologicalReaction direction="left-to-right" evidence="1">
        <dbReference type="Rhea" id="RHEA:42717"/>
    </physiologicalReaction>
</comment>
<comment type="catalytic activity">
    <reaction evidence="1">
        <text>5-methylaminomethyl-2-thiouridine(34) in tRNA + (2E)-geranyl diphosphate = 5-methylaminomethyl-S-(2E)-geranyl-thiouridine(34) in tRNA + diphosphate</text>
        <dbReference type="Rhea" id="RHEA:14085"/>
        <dbReference type="Rhea" id="RHEA-COMP:10195"/>
        <dbReference type="Rhea" id="RHEA-COMP:14654"/>
        <dbReference type="ChEBI" id="CHEBI:33019"/>
        <dbReference type="ChEBI" id="CHEBI:58057"/>
        <dbReference type="ChEBI" id="CHEBI:74455"/>
        <dbReference type="ChEBI" id="CHEBI:140632"/>
    </reaction>
    <physiologicalReaction direction="left-to-right" evidence="1">
        <dbReference type="Rhea" id="RHEA:14086"/>
    </physiologicalReaction>
</comment>
<comment type="catalytic activity">
    <reaction evidence="1">
        <text>5-methylaminomethyl-S-(2E)-geranyl-thiouridine(34) in tRNA + selenophosphate + H(+) = 5-methylaminomethyl-2-(Se-phospho)selenouridine(34) in tRNA + (2E)-thiogeraniol</text>
        <dbReference type="Rhea" id="RHEA:60172"/>
        <dbReference type="Rhea" id="RHEA-COMP:14654"/>
        <dbReference type="Rhea" id="RHEA-COMP:15523"/>
        <dbReference type="ChEBI" id="CHEBI:15378"/>
        <dbReference type="ChEBI" id="CHEBI:16144"/>
        <dbReference type="ChEBI" id="CHEBI:140632"/>
        <dbReference type="ChEBI" id="CHEBI:143702"/>
        <dbReference type="ChEBI" id="CHEBI:143703"/>
    </reaction>
    <physiologicalReaction direction="left-to-right" evidence="1">
        <dbReference type="Rhea" id="RHEA:60173"/>
    </physiologicalReaction>
</comment>
<comment type="catalytic activity">
    <reaction evidence="1">
        <text>5-methylaminomethyl-2-(Se-phospho)selenouridine(34) in tRNA + H2O = 5-methylaminomethyl-2-selenouridine(34) in tRNA + phosphate</text>
        <dbReference type="Rhea" id="RHEA:60176"/>
        <dbReference type="Rhea" id="RHEA-COMP:10196"/>
        <dbReference type="Rhea" id="RHEA-COMP:15523"/>
        <dbReference type="ChEBI" id="CHEBI:15377"/>
        <dbReference type="ChEBI" id="CHEBI:43474"/>
        <dbReference type="ChEBI" id="CHEBI:82743"/>
        <dbReference type="ChEBI" id="CHEBI:143702"/>
    </reaction>
    <physiologicalReaction direction="left-to-right" evidence="1">
        <dbReference type="Rhea" id="RHEA:60177"/>
    </physiologicalReaction>
</comment>
<comment type="subunit">
    <text evidence="1">Monomer.</text>
</comment>
<comment type="similarity">
    <text evidence="1">Belongs to the SelU family.</text>
</comment>